<keyword id="KW-1185">Reference proteome</keyword>
<gene>
    <name type="primary">ydeU</name>
    <name type="ordered locus">b1509</name>
    <name type="ordered locus">JW1502</name>
</gene>
<feature type="chain" id="PRO_0000204731" description="Uncharacterized protein YdeU">
    <location>
        <begin position="1"/>
        <end position="466"/>
    </location>
</feature>
<feature type="domain" description="Autotransporter" evidence="1">
    <location>
        <begin position="178"/>
        <end position="466"/>
    </location>
</feature>
<dbReference type="EMBL" id="U00096">
    <property type="status" value="NOT_ANNOTATED_CDS"/>
    <property type="molecule type" value="Genomic_DNA"/>
</dbReference>
<dbReference type="EMBL" id="AP009048">
    <property type="status" value="NOT_ANNOTATED_CDS"/>
    <property type="molecule type" value="Genomic_DNA"/>
</dbReference>
<dbReference type="PIR" id="H64904">
    <property type="entry name" value="H64904"/>
</dbReference>
<dbReference type="SMR" id="P77286"/>
<dbReference type="FunCoup" id="P77286">
    <property type="interactions" value="61"/>
</dbReference>
<dbReference type="IntAct" id="P77286">
    <property type="interactions" value="8"/>
</dbReference>
<dbReference type="KEGG" id="ecoc:C3026_08730"/>
<dbReference type="PATRIC" id="fig|83333.103.peg.2339"/>
<dbReference type="EchoBASE" id="EB3564"/>
<dbReference type="InParanoid" id="P77286"/>
<dbReference type="OMA" id="FTWAGDW"/>
<dbReference type="OrthoDB" id="6053567at2"/>
<dbReference type="PhylomeDB" id="P77286"/>
<dbReference type="Proteomes" id="UP000000625">
    <property type="component" value="Chromosome"/>
</dbReference>
<dbReference type="GO" id="GO:0019867">
    <property type="term" value="C:outer membrane"/>
    <property type="evidence" value="ECO:0007669"/>
    <property type="project" value="InterPro"/>
</dbReference>
<dbReference type="CDD" id="cd01344">
    <property type="entry name" value="PL2_Passenger_AT"/>
    <property type="match status" value="1"/>
</dbReference>
<dbReference type="Gene3D" id="2.160.20.20">
    <property type="match status" value="1"/>
</dbReference>
<dbReference type="Gene3D" id="2.40.128.130">
    <property type="entry name" value="Autotransporter beta-domain"/>
    <property type="match status" value="1"/>
</dbReference>
<dbReference type="InterPro" id="IPR043990">
    <property type="entry name" value="AC_1"/>
</dbReference>
<dbReference type="InterPro" id="IPR005546">
    <property type="entry name" value="Autotransporte_beta"/>
</dbReference>
<dbReference type="InterPro" id="IPR036709">
    <property type="entry name" value="Autotransporte_beta_dom_sf"/>
</dbReference>
<dbReference type="InterPro" id="IPR012332">
    <property type="entry name" value="Autotransporter_pectin_lyase_C"/>
</dbReference>
<dbReference type="InterPro" id="IPR050909">
    <property type="entry name" value="Bact_Autotransporter_VF"/>
</dbReference>
<dbReference type="InterPro" id="IPR006315">
    <property type="entry name" value="OM_autotransptr_brl_dom"/>
</dbReference>
<dbReference type="InterPro" id="IPR011050">
    <property type="entry name" value="Pectin_lyase_fold/virulence"/>
</dbReference>
<dbReference type="NCBIfam" id="TIGR01414">
    <property type="entry name" value="autotrans_barl"/>
    <property type="match status" value="1"/>
</dbReference>
<dbReference type="PANTHER" id="PTHR12338:SF5">
    <property type="entry name" value="ANTIGEN 43-RELATED"/>
    <property type="match status" value="1"/>
</dbReference>
<dbReference type="PANTHER" id="PTHR12338">
    <property type="entry name" value="AUTOTRANSPORTER"/>
    <property type="match status" value="1"/>
</dbReference>
<dbReference type="Pfam" id="PF18883">
    <property type="entry name" value="AC_1"/>
    <property type="match status" value="1"/>
</dbReference>
<dbReference type="Pfam" id="PF03797">
    <property type="entry name" value="Autotransporter"/>
    <property type="match status" value="1"/>
</dbReference>
<dbReference type="SMART" id="SM00869">
    <property type="entry name" value="Autotransporter"/>
    <property type="match status" value="1"/>
</dbReference>
<dbReference type="SUPFAM" id="SSF103515">
    <property type="entry name" value="Autotransporter"/>
    <property type="match status" value="1"/>
</dbReference>
<dbReference type="SUPFAM" id="SSF51126">
    <property type="entry name" value="Pectin lyase-like"/>
    <property type="match status" value="1"/>
</dbReference>
<dbReference type="PROSITE" id="PS51208">
    <property type="entry name" value="AUTOTRANSPORTER"/>
    <property type="match status" value="1"/>
</dbReference>
<reference key="1">
    <citation type="journal article" date="1996" name="DNA Res.">
        <title>A 570-kb DNA sequence of the Escherichia coli K-12 genome corresponding to the 28.0-40.1 min region on the linkage map.</title>
        <authorList>
            <person name="Aiba H."/>
            <person name="Baba T."/>
            <person name="Fujita K."/>
            <person name="Hayashi K."/>
            <person name="Inada T."/>
            <person name="Isono K."/>
            <person name="Itoh T."/>
            <person name="Kasai H."/>
            <person name="Kashimoto K."/>
            <person name="Kimura S."/>
            <person name="Kitakawa M."/>
            <person name="Kitagawa M."/>
            <person name="Makino K."/>
            <person name="Miki T."/>
            <person name="Mizobuchi K."/>
            <person name="Mori H."/>
            <person name="Mori T."/>
            <person name="Motomura K."/>
            <person name="Nakade S."/>
            <person name="Nakamura Y."/>
            <person name="Nashimoto H."/>
            <person name="Nishio Y."/>
            <person name="Oshima T."/>
            <person name="Saito N."/>
            <person name="Sampei G."/>
            <person name="Seki Y."/>
            <person name="Sivasundaram S."/>
            <person name="Tagami H."/>
            <person name="Takeda J."/>
            <person name="Takemoto K."/>
            <person name="Takeuchi Y."/>
            <person name="Wada C."/>
            <person name="Yamamoto Y."/>
            <person name="Horiuchi T."/>
        </authorList>
    </citation>
    <scope>NUCLEOTIDE SEQUENCE [LARGE SCALE GENOMIC DNA]</scope>
    <source>
        <strain>K12 / W3110 / ATCC 27325 / DSM 5911</strain>
    </source>
</reference>
<reference key="2">
    <citation type="journal article" date="1997" name="Science">
        <title>The complete genome sequence of Escherichia coli K-12.</title>
        <authorList>
            <person name="Blattner F.R."/>
            <person name="Plunkett G. III"/>
            <person name="Bloch C.A."/>
            <person name="Perna N.T."/>
            <person name="Burland V."/>
            <person name="Riley M."/>
            <person name="Collado-Vides J."/>
            <person name="Glasner J.D."/>
            <person name="Rode C.K."/>
            <person name="Mayhew G.F."/>
            <person name="Gregor J."/>
            <person name="Davis N.W."/>
            <person name="Kirkpatrick H.A."/>
            <person name="Goeden M.A."/>
            <person name="Rose D.J."/>
            <person name="Mau B."/>
            <person name="Shao Y."/>
        </authorList>
    </citation>
    <scope>NUCLEOTIDE SEQUENCE [LARGE SCALE GENOMIC DNA]</scope>
    <source>
        <strain>K12 / MG1655 / ATCC 47076</strain>
    </source>
</reference>
<reference key="3">
    <citation type="journal article" date="2006" name="Mol. Syst. Biol.">
        <title>Highly accurate genome sequences of Escherichia coli K-12 strains MG1655 and W3110.</title>
        <authorList>
            <person name="Hayashi K."/>
            <person name="Morooka N."/>
            <person name="Yamamoto Y."/>
            <person name="Fujita K."/>
            <person name="Isono K."/>
            <person name="Choi S."/>
            <person name="Ohtsubo E."/>
            <person name="Baba T."/>
            <person name="Wanner B.L."/>
            <person name="Mori H."/>
            <person name="Horiuchi T."/>
        </authorList>
    </citation>
    <scope>NUCLEOTIDE SEQUENCE [LARGE SCALE GENOMIC DNA]</scope>
    <source>
        <strain>K12 / W3110 / ATCC 27325 / DSM 5911</strain>
    </source>
</reference>
<name>YDEU_ECOLI</name>
<organism>
    <name type="scientific">Escherichia coli (strain K12)</name>
    <dbReference type="NCBI Taxonomy" id="83333"/>
    <lineage>
        <taxon>Bacteria</taxon>
        <taxon>Pseudomonadati</taxon>
        <taxon>Pseudomonadota</taxon>
        <taxon>Gammaproteobacteria</taxon>
        <taxon>Enterobacterales</taxon>
        <taxon>Enterobacteriaceae</taxon>
        <taxon>Escherichia</taxon>
    </lineage>
</organism>
<proteinExistence type="uncertain"/>
<evidence type="ECO:0000255" key="1">
    <source>
        <dbReference type="PROSITE-ProRule" id="PRU00556"/>
    </source>
</evidence>
<evidence type="ECO:0000305" key="2"/>
<accession>P77286</accession>
<accession>P76878</accession>
<comment type="caution">
    <text evidence="2">Could be the product of a pseudogene.</text>
</comment>
<sequence>MNSEGGKPGNVLTVNGNYTGNNGLMTFNATLGGDNSPTDKMNVKGDTQGNTRVRVDNIGGVGAQTVNGIELIEVGGNSAGNFALTTGTVEAGAYVYTLAKGKGNDEKNWYLTSKWDGVTPADTPDPINNPPVVDPEGPSVYRPEAGSYISNIAAANSLFSHRLHDRLGEPQYTDSLHSQGSASSMWMRHVGGHERSRAGDGQLNTQANRYVLQLGGDLAQWSSNAQDRWHLGVMAGYANQHSNTQSNRVGYKSDGRISGYSAGLYATWYQNDANKTGAYVDSWALYNWFDNSVSSDNRSADDYDSRGVTASVEGGYTFEAGTFSGSEGTLNTWYVQPQAQITWMGVKDSDHTRKDGTRIETEGDGNVQTRLGVKTYLNSHHQRDDGKQREFQPYIEANWINNSKVYAVKMNGQTVGREGARNLGEVRTGVEAKVNNNLSLWGNVGVQLGDKGYSDTQGMLGVKYSW</sequence>
<protein>
    <recommendedName>
        <fullName>Uncharacterized protein YdeU</fullName>
    </recommendedName>
</protein>